<organism>
    <name type="scientific">Saccharolobus solfataricus (strain ATCC 35092 / DSM 1617 / JCM 11322 / P2)</name>
    <name type="common">Sulfolobus solfataricus</name>
    <dbReference type="NCBI Taxonomy" id="273057"/>
    <lineage>
        <taxon>Archaea</taxon>
        <taxon>Thermoproteota</taxon>
        <taxon>Thermoprotei</taxon>
        <taxon>Sulfolobales</taxon>
        <taxon>Sulfolobaceae</taxon>
        <taxon>Saccharolobus</taxon>
    </lineage>
</organism>
<protein>
    <recommendedName>
        <fullName>Threonine--tRNA ligase editing subunit</fullName>
    </recommendedName>
    <alternativeName>
        <fullName evidence="4">Ser-tRNA(Thr) hydrolase</fullName>
    </alternativeName>
    <alternativeName>
        <fullName evidence="3">Threonyl-tRNA synthetase editing subunit</fullName>
        <shortName evidence="3">ThrS-ed</shortName>
    </alternativeName>
</protein>
<reference key="1">
    <citation type="journal article" date="2001" name="Proc. Natl. Acad. Sci. U.S.A.">
        <title>The complete genome of the crenarchaeon Sulfolobus solfataricus P2.</title>
        <authorList>
            <person name="She Q."/>
            <person name="Singh R.K."/>
            <person name="Confalonieri F."/>
            <person name="Zivanovic Y."/>
            <person name="Allard G."/>
            <person name="Awayez M.J."/>
            <person name="Chan-Weiher C.C.-Y."/>
            <person name="Clausen I.G."/>
            <person name="Curtis B.A."/>
            <person name="De Moors A."/>
            <person name="Erauso G."/>
            <person name="Fletcher C."/>
            <person name="Gordon P.M.K."/>
            <person name="Heikamp-de Jong I."/>
            <person name="Jeffries A.C."/>
            <person name="Kozera C.J."/>
            <person name="Medina N."/>
            <person name="Peng X."/>
            <person name="Thi-Ngoc H.P."/>
            <person name="Redder P."/>
            <person name="Schenk M.E."/>
            <person name="Theriault C."/>
            <person name="Tolstrup N."/>
            <person name="Charlebois R.L."/>
            <person name="Doolittle W.F."/>
            <person name="Duguet M."/>
            <person name="Gaasterland T."/>
            <person name="Garrett R.A."/>
            <person name="Ragan M.A."/>
            <person name="Sensen C.W."/>
            <person name="Van der Oost J."/>
        </authorList>
    </citation>
    <scope>NUCLEOTIDE SEQUENCE [LARGE SCALE GENOMIC DNA]</scope>
    <source>
        <strain>ATCC 35092 / DSM 1617 / JCM 11322 / P2</strain>
    </source>
</reference>
<reference key="2">
    <citation type="journal article" date="2004" name="Proc. Natl. Acad. Sci. U.S.A.">
        <title>A freestanding proofreading domain is required for protein synthesis quality control in Archaea.</title>
        <authorList>
            <person name="Korencic D."/>
            <person name="Ahel I."/>
            <person name="Schelert J."/>
            <person name="Sacher M."/>
            <person name="Ruan B."/>
            <person name="Stathopoulos C."/>
            <person name="Blum P."/>
            <person name="Ibba M."/>
            <person name="Soell D."/>
        </authorList>
    </citation>
    <scope>FUNCTION IN EDITING</scope>
    <scope>SUBUNIT</scope>
    <scope>DISRUPTION PHENOTYPE</scope>
    <source>
        <strain>ATCC 35092 / DSM 1617 / JCM 11322 / P2</strain>
    </source>
</reference>
<accession>Q980D1</accession>
<gene>
    <name evidence="3" type="primary">thrS-ed</name>
    <name type="ordered locus">SSO0384</name>
</gene>
<dbReference type="EMBL" id="AE006641">
    <property type="protein sequence ID" value="AAK40712.1"/>
    <property type="molecule type" value="Genomic_DNA"/>
</dbReference>
<dbReference type="PIR" id="A90182">
    <property type="entry name" value="A90182"/>
</dbReference>
<dbReference type="RefSeq" id="WP_009988816.1">
    <property type="nucleotide sequence ID" value="NC_002754.1"/>
</dbReference>
<dbReference type="SMR" id="Q980D1"/>
<dbReference type="STRING" id="273057.SSO0384"/>
<dbReference type="PaxDb" id="273057-SSO0384"/>
<dbReference type="EnsemblBacteria" id="AAK40712">
    <property type="protein sequence ID" value="AAK40712"/>
    <property type="gene ID" value="SSO0384"/>
</dbReference>
<dbReference type="KEGG" id="sso:SSO0384"/>
<dbReference type="PATRIC" id="fig|273057.12.peg.378"/>
<dbReference type="eggNOG" id="arCOG00401">
    <property type="taxonomic scope" value="Archaea"/>
</dbReference>
<dbReference type="HOGENOM" id="CLU_712936_0_0_2"/>
<dbReference type="InParanoid" id="Q980D1"/>
<dbReference type="PhylomeDB" id="Q980D1"/>
<dbReference type="BRENDA" id="6.1.1.3">
    <property type="organism ID" value="6163"/>
</dbReference>
<dbReference type="Proteomes" id="UP000001974">
    <property type="component" value="Chromosome"/>
</dbReference>
<dbReference type="GO" id="GO:0005737">
    <property type="term" value="C:cytoplasm"/>
    <property type="evidence" value="ECO:0007669"/>
    <property type="project" value="UniProtKB-SubCell"/>
</dbReference>
<dbReference type="GO" id="GO:0002161">
    <property type="term" value="F:aminoacyl-tRNA deacylase activity"/>
    <property type="evidence" value="ECO:0000314"/>
    <property type="project" value="UniProtKB"/>
</dbReference>
<dbReference type="GO" id="GO:0005524">
    <property type="term" value="F:ATP binding"/>
    <property type="evidence" value="ECO:0007669"/>
    <property type="project" value="InterPro"/>
</dbReference>
<dbReference type="GO" id="GO:0008270">
    <property type="term" value="F:zinc ion binding"/>
    <property type="evidence" value="ECO:0007669"/>
    <property type="project" value="InterPro"/>
</dbReference>
<dbReference type="GO" id="GO:0006412">
    <property type="term" value="P:translation"/>
    <property type="evidence" value="ECO:0007669"/>
    <property type="project" value="UniProtKB-KW"/>
</dbReference>
<dbReference type="CDD" id="cd00860">
    <property type="entry name" value="ThrRS_anticodon"/>
    <property type="match status" value="1"/>
</dbReference>
<dbReference type="FunFam" id="3.40.50.800:FF:000001">
    <property type="entry name" value="Threonine--tRNA ligase"/>
    <property type="match status" value="1"/>
</dbReference>
<dbReference type="FunFam" id="3.50.80.10:FF:000004">
    <property type="entry name" value="Threonine--tRNA ligase"/>
    <property type="match status" value="1"/>
</dbReference>
<dbReference type="Gene3D" id="3.40.50.800">
    <property type="entry name" value="Anticodon-binding domain"/>
    <property type="match status" value="1"/>
</dbReference>
<dbReference type="Gene3D" id="3.50.80.10">
    <property type="entry name" value="D-tyrosyl-tRNA(Tyr) deacylase"/>
    <property type="match status" value="1"/>
</dbReference>
<dbReference type="InterPro" id="IPR004154">
    <property type="entry name" value="Anticodon-bd"/>
</dbReference>
<dbReference type="InterPro" id="IPR036621">
    <property type="entry name" value="Anticodon-bd_dom_sf"/>
</dbReference>
<dbReference type="InterPro" id="IPR023509">
    <property type="entry name" value="DTD-like_sf"/>
</dbReference>
<dbReference type="InterPro" id="IPR015011">
    <property type="entry name" value="Threonyl-tRNA_syn_edit_dom_arc"/>
</dbReference>
<dbReference type="InterPro" id="IPR047246">
    <property type="entry name" value="ThrRS_anticodon"/>
</dbReference>
<dbReference type="NCBIfam" id="NF011500">
    <property type="entry name" value="PRK14938.1"/>
    <property type="match status" value="1"/>
</dbReference>
<dbReference type="PANTHER" id="PTHR11451:SF44">
    <property type="entry name" value="THREONINE--TRNA LIGASE, CHLOROPLASTIC_MITOCHONDRIAL 2"/>
    <property type="match status" value="1"/>
</dbReference>
<dbReference type="PANTHER" id="PTHR11451">
    <property type="entry name" value="THREONINE-TRNA LIGASE"/>
    <property type="match status" value="1"/>
</dbReference>
<dbReference type="Pfam" id="PF03129">
    <property type="entry name" value="HGTP_anticodon"/>
    <property type="match status" value="1"/>
</dbReference>
<dbReference type="Pfam" id="PF08915">
    <property type="entry name" value="tRNA-Thr_ED"/>
    <property type="match status" value="1"/>
</dbReference>
<dbReference type="SUPFAM" id="SSF52954">
    <property type="entry name" value="Class II aaRS ABD-related"/>
    <property type="match status" value="1"/>
</dbReference>
<sequence length="386" mass="44954">MIILFIHASDFSFNVKERAIKEPEEAKLKSIELKNTLVCFTTVEKGDDEEILSKAIDDILDVYSKVKADSVVIYPYAHLSSNLANPDTAIKILESLENLLKDKVKVYRAPFGWYKAFSISCYGHPLSELSRRIRKTEELEKSEELKYCEKFGFPSSSESAFMRRATIGYLRNLFQPLFESENNENVRDGEMSILYQNVESGRILPCINENPRIVVVYGGVRELNFPKEINDSKNRIRVWWVNESKIYVDVGRLIYYFILESVKQQPPTLPDWLNPIQVRLLPVKKDFLDFSIQVAERLRKEGIRVNIDDLDDSLGNKIRRAGTDWIPFVIVIGEREVKTNTLTVKIRARNEQKSMTVEELVKEIKDEVKERQNLPLYYTLYRHKNN</sequence>
<comment type="function">
    <text evidence="1 2">Freestanding tRNA editing subunit of threonine--tRNA ligase, the catalytic subunit is AC Q97VW8. Deacylates (edits) mischarged L-seryl-tRNA(Thr) in trans, removing L-serine, has no aminoacylation activity. In vitro when both subunits are present, or if the 2 subunits are fused, L-seryl-tRNA(Thr) is no longer produced. Has no activity on correctly acylated L-seryl-tRNA(Ser) or L-threonyl-tRNA(Thr) (PubMed:15240874). Editing is probably catalyzed by the 2'-OH of A76 of tRNA(Thr) (By similarity).</text>
</comment>
<comment type="subunit">
    <text evidence="5">Probably interacts with its catalytic subunit (AC Q97VW8); a subunit fusion (in the order edit-catalytic) is fully functional.</text>
</comment>
<comment type="subcellular location">
    <subcellularLocation>
        <location evidence="4">Cytoplasm</location>
    </subcellularLocation>
</comment>
<comment type="disruption phenotype">
    <text evidence="2">Not essential, however growth is severely inhibited in the presence of 0.5 mM L-serine, but not in the presence of 0.5 mM L-ser plus 0.5 mM L-threonine.</text>
</comment>
<comment type="similarity">
    <text evidence="4">Belongs to the class-II aminoacyl-tRNA synthetase family. Archaea-specific ThrRS editing domain subfamily.</text>
</comment>
<feature type="chain" id="PRO_0000441620" description="Threonine--tRNA ligase editing subunit">
    <location>
        <begin position="1"/>
        <end position="386"/>
    </location>
</feature>
<proteinExistence type="evidence at protein level"/>
<evidence type="ECO:0000250" key="1">
    <source>
        <dbReference type="UniProtKB" id="Q9YFY3"/>
    </source>
</evidence>
<evidence type="ECO:0000269" key="2">
    <source>
    </source>
</evidence>
<evidence type="ECO:0000303" key="3">
    <source>
    </source>
</evidence>
<evidence type="ECO:0000305" key="4"/>
<evidence type="ECO:0000305" key="5">
    <source>
    </source>
</evidence>
<keyword id="KW-0963">Cytoplasm</keyword>
<keyword id="KW-0648">Protein biosynthesis</keyword>
<keyword id="KW-1185">Reference proteome</keyword>
<name>SYTE_SACS2</name>